<feature type="signal peptide" evidence="2">
    <location>
        <begin position="1"/>
        <end position="21"/>
    </location>
</feature>
<feature type="chain" id="PRO_0000008792" description="FAS1 domain-containing protein AFUA_8G05360">
    <location>
        <begin position="22"/>
        <end position="234"/>
    </location>
</feature>
<feature type="domain" description="FAS1" evidence="3">
    <location>
        <begin position="83"/>
        <end position="231"/>
    </location>
</feature>
<protein>
    <recommendedName>
        <fullName>FAS1 domain-containing protein AFUA_8G05360</fullName>
    </recommendedName>
</protein>
<accession>Q4WC84</accession>
<dbReference type="EMBL" id="AAHF01000013">
    <property type="protein sequence ID" value="EAL85300.1"/>
    <property type="molecule type" value="Genomic_DNA"/>
</dbReference>
<dbReference type="RefSeq" id="XP_747338.1">
    <property type="nucleotide sequence ID" value="XM_742245.1"/>
</dbReference>
<dbReference type="SMR" id="Q4WC84"/>
<dbReference type="FunCoup" id="Q4WC84">
    <property type="interactions" value="6"/>
</dbReference>
<dbReference type="STRING" id="330879.Q4WC84"/>
<dbReference type="EnsemblFungi" id="EAL85300">
    <property type="protein sequence ID" value="EAL85300"/>
    <property type="gene ID" value="AFUA_8G05360"/>
</dbReference>
<dbReference type="GeneID" id="3504946"/>
<dbReference type="KEGG" id="afm:AFUA_8G05360"/>
<dbReference type="VEuPathDB" id="FungiDB:Afu8g05360"/>
<dbReference type="eggNOG" id="ENOG502SC55">
    <property type="taxonomic scope" value="Eukaryota"/>
</dbReference>
<dbReference type="HOGENOM" id="CLU_091398_0_0_1"/>
<dbReference type="InParanoid" id="Q4WC84"/>
<dbReference type="OMA" id="PWENPED"/>
<dbReference type="OrthoDB" id="5551751at2759"/>
<dbReference type="Proteomes" id="UP000002530">
    <property type="component" value="Chromosome 8"/>
</dbReference>
<dbReference type="GO" id="GO:0005773">
    <property type="term" value="C:vacuole"/>
    <property type="evidence" value="ECO:0007669"/>
    <property type="project" value="UniProtKB-SubCell"/>
</dbReference>
<dbReference type="Gene3D" id="2.30.180.10">
    <property type="entry name" value="FAS1 domain"/>
    <property type="match status" value="1"/>
</dbReference>
<dbReference type="InterPro" id="IPR036378">
    <property type="entry name" value="FAS1_dom_sf"/>
</dbReference>
<dbReference type="InterPro" id="IPR000782">
    <property type="entry name" value="FAS1_domain"/>
</dbReference>
<dbReference type="InterPro" id="IPR040200">
    <property type="entry name" value="Mug57-like"/>
</dbReference>
<dbReference type="PANTHER" id="PTHR28156">
    <property type="entry name" value="FAS1 DOMAIN-CONTAINING PROTEIN YDR262W"/>
    <property type="match status" value="1"/>
</dbReference>
<dbReference type="PANTHER" id="PTHR28156:SF1">
    <property type="entry name" value="FAS1 DOMAIN-CONTAINING PROTEIN YDR262W"/>
    <property type="match status" value="1"/>
</dbReference>
<dbReference type="Pfam" id="PF02469">
    <property type="entry name" value="Fasciclin"/>
    <property type="match status" value="1"/>
</dbReference>
<dbReference type="SUPFAM" id="SSF82153">
    <property type="entry name" value="FAS1 domain"/>
    <property type="match status" value="1"/>
</dbReference>
<dbReference type="PROSITE" id="PS50213">
    <property type="entry name" value="FAS1"/>
    <property type="match status" value="1"/>
</dbReference>
<gene>
    <name type="ORF">AFUA_8G05360</name>
</gene>
<organism>
    <name type="scientific">Aspergillus fumigatus (strain ATCC MYA-4609 / CBS 101355 / FGSC A1100 / Af293)</name>
    <name type="common">Neosartorya fumigata</name>
    <dbReference type="NCBI Taxonomy" id="330879"/>
    <lineage>
        <taxon>Eukaryota</taxon>
        <taxon>Fungi</taxon>
        <taxon>Dikarya</taxon>
        <taxon>Ascomycota</taxon>
        <taxon>Pezizomycotina</taxon>
        <taxon>Eurotiomycetes</taxon>
        <taxon>Eurotiomycetidae</taxon>
        <taxon>Eurotiales</taxon>
        <taxon>Aspergillaceae</taxon>
        <taxon>Aspergillus</taxon>
        <taxon>Aspergillus subgen. Fumigati</taxon>
    </lineage>
</organism>
<comment type="subcellular location">
    <subcellularLocation>
        <location evidence="1">Vacuole</location>
    </subcellularLocation>
</comment>
<reference key="1">
    <citation type="journal article" date="2005" name="Nature">
        <title>Genomic sequence of the pathogenic and allergenic filamentous fungus Aspergillus fumigatus.</title>
        <authorList>
            <person name="Nierman W.C."/>
            <person name="Pain A."/>
            <person name="Anderson M.J."/>
            <person name="Wortman J.R."/>
            <person name="Kim H.S."/>
            <person name="Arroyo J."/>
            <person name="Berriman M."/>
            <person name="Abe K."/>
            <person name="Archer D.B."/>
            <person name="Bermejo C."/>
            <person name="Bennett J.W."/>
            <person name="Bowyer P."/>
            <person name="Chen D."/>
            <person name="Collins M."/>
            <person name="Coulsen R."/>
            <person name="Davies R."/>
            <person name="Dyer P.S."/>
            <person name="Farman M.L."/>
            <person name="Fedorova N."/>
            <person name="Fedorova N.D."/>
            <person name="Feldblyum T.V."/>
            <person name="Fischer R."/>
            <person name="Fosker N."/>
            <person name="Fraser A."/>
            <person name="Garcia J.L."/>
            <person name="Garcia M.J."/>
            <person name="Goble A."/>
            <person name="Goldman G.H."/>
            <person name="Gomi K."/>
            <person name="Griffith-Jones S."/>
            <person name="Gwilliam R."/>
            <person name="Haas B.J."/>
            <person name="Haas H."/>
            <person name="Harris D.E."/>
            <person name="Horiuchi H."/>
            <person name="Huang J."/>
            <person name="Humphray S."/>
            <person name="Jimenez J."/>
            <person name="Keller N."/>
            <person name="Khouri H."/>
            <person name="Kitamoto K."/>
            <person name="Kobayashi T."/>
            <person name="Konzack S."/>
            <person name="Kulkarni R."/>
            <person name="Kumagai T."/>
            <person name="Lafton A."/>
            <person name="Latge J.-P."/>
            <person name="Li W."/>
            <person name="Lord A."/>
            <person name="Lu C."/>
            <person name="Majoros W.H."/>
            <person name="May G.S."/>
            <person name="Miller B.L."/>
            <person name="Mohamoud Y."/>
            <person name="Molina M."/>
            <person name="Monod M."/>
            <person name="Mouyna I."/>
            <person name="Mulligan S."/>
            <person name="Murphy L.D."/>
            <person name="O'Neil S."/>
            <person name="Paulsen I."/>
            <person name="Penalva M.A."/>
            <person name="Pertea M."/>
            <person name="Price C."/>
            <person name="Pritchard B.L."/>
            <person name="Quail M.A."/>
            <person name="Rabbinowitsch E."/>
            <person name="Rawlins N."/>
            <person name="Rajandream M.A."/>
            <person name="Reichard U."/>
            <person name="Renauld H."/>
            <person name="Robson G.D."/>
            <person name="Rodriguez de Cordoba S."/>
            <person name="Rodriguez-Pena J.M."/>
            <person name="Ronning C.M."/>
            <person name="Rutter S."/>
            <person name="Salzberg S.L."/>
            <person name="Sanchez M."/>
            <person name="Sanchez-Ferrero J.C."/>
            <person name="Saunders D."/>
            <person name="Seeger K."/>
            <person name="Squares R."/>
            <person name="Squares S."/>
            <person name="Takeuchi M."/>
            <person name="Tekaia F."/>
            <person name="Turner G."/>
            <person name="Vazquez de Aldana C.R."/>
            <person name="Weidman J."/>
            <person name="White O."/>
            <person name="Woodward J.R."/>
            <person name="Yu J.-H."/>
            <person name="Fraser C.M."/>
            <person name="Galagan J.E."/>
            <person name="Asai K."/>
            <person name="Machida M."/>
            <person name="Hall N."/>
            <person name="Barrell B.G."/>
            <person name="Denning D.W."/>
        </authorList>
    </citation>
    <scope>NUCLEOTIDE SEQUENCE [LARGE SCALE GENOMIC DNA]</scope>
    <source>
        <strain>ATCC MYA-4609 / CBS 101355 / FGSC A1100 / Af293</strain>
    </source>
</reference>
<name>YFAS1_ASPFU</name>
<sequence>MRRTLFVLFVVAFCFIGSVIANLSLPPGFSLRKRLPRSLVDILHLRHEQGLRDDTELRNWLSKQQPAMNKMFSSSSRENGSEKPVVSDVLPKNRAINIFASLTRQFEPIESRLNDSSKNITVLAPRNSAIQSLPRKPWENPEDYEKFGGVSAYEGQEGEDRAKQNLQRFVEAHIIPASPWREGEEMETLGGEKLKWIKKGDKIYIQPGNVEVDNIAETVINGELWILNSVLNYR</sequence>
<evidence type="ECO:0000250" key="1"/>
<evidence type="ECO:0000255" key="2"/>
<evidence type="ECO:0000255" key="3">
    <source>
        <dbReference type="PROSITE-ProRule" id="PRU00082"/>
    </source>
</evidence>
<proteinExistence type="inferred from homology"/>
<keyword id="KW-1185">Reference proteome</keyword>
<keyword id="KW-0732">Signal</keyword>
<keyword id="KW-0926">Vacuole</keyword>